<name>T229B_CHICK</name>
<proteinExistence type="evidence at transcript level"/>
<feature type="chain" id="PRO_0000359900" description="Transmembrane protein 229B">
    <location>
        <begin position="1"/>
        <end position="167"/>
    </location>
</feature>
<feature type="topological domain" description="Cytoplasmic" evidence="1">
    <location>
        <begin position="1"/>
        <end position="14"/>
    </location>
</feature>
<feature type="transmembrane region" description="Helical" evidence="1">
    <location>
        <begin position="15"/>
        <end position="35"/>
    </location>
</feature>
<feature type="topological domain" description="Extracellular" evidence="1">
    <location>
        <begin position="36"/>
        <end position="40"/>
    </location>
</feature>
<feature type="transmembrane region" description="Helical" evidence="1">
    <location>
        <begin position="41"/>
        <end position="61"/>
    </location>
</feature>
<feature type="topological domain" description="Cytoplasmic" evidence="1">
    <location>
        <begin position="62"/>
        <end position="72"/>
    </location>
</feature>
<feature type="transmembrane region" description="Helical" evidence="1">
    <location>
        <begin position="73"/>
        <end position="93"/>
    </location>
</feature>
<feature type="topological domain" description="Extracellular" evidence="1">
    <location>
        <begin position="94"/>
        <end position="109"/>
    </location>
</feature>
<feature type="transmembrane region" description="Helical" evidence="1">
    <location>
        <begin position="110"/>
        <end position="130"/>
    </location>
</feature>
<feature type="topological domain" description="Cytoplasmic" evidence="1">
    <location>
        <begin position="131"/>
        <end position="167"/>
    </location>
</feature>
<gene>
    <name type="primary">TMEM229B</name>
    <name type="ORF">RCJMB04_13p15</name>
</gene>
<evidence type="ECO:0000255" key="1"/>
<evidence type="ECO:0000305" key="2"/>
<organism>
    <name type="scientific">Gallus gallus</name>
    <name type="common">Chicken</name>
    <dbReference type="NCBI Taxonomy" id="9031"/>
    <lineage>
        <taxon>Eukaryota</taxon>
        <taxon>Metazoa</taxon>
        <taxon>Chordata</taxon>
        <taxon>Craniata</taxon>
        <taxon>Vertebrata</taxon>
        <taxon>Euteleostomi</taxon>
        <taxon>Archelosauria</taxon>
        <taxon>Archosauria</taxon>
        <taxon>Dinosauria</taxon>
        <taxon>Saurischia</taxon>
        <taxon>Theropoda</taxon>
        <taxon>Coelurosauria</taxon>
        <taxon>Aves</taxon>
        <taxon>Neognathae</taxon>
        <taxon>Galloanserae</taxon>
        <taxon>Galliformes</taxon>
        <taxon>Phasianidae</taxon>
        <taxon>Phasianinae</taxon>
        <taxon>Gallus</taxon>
    </lineage>
</organism>
<keyword id="KW-0472">Membrane</keyword>
<keyword id="KW-1185">Reference proteome</keyword>
<keyword id="KW-0812">Transmembrane</keyword>
<keyword id="KW-1133">Transmembrane helix</keyword>
<sequence length="167" mass="19617">MAAAEPLTAFSRWYLYAIHGYFCEVMFTAAWEFVVNFNWKFPGVTSVWALFIYGTSILIVEKMYLYLKDKCHILVRCFIYTLWTYLWEFTTGLILRQFNACPWDYSQFDFDFMGLITLEYAIPWFCASFIMEQLVIRNTLRLRFDETAEPGAPTVPVALANGHVKTD</sequence>
<comment type="subcellular location">
    <subcellularLocation>
        <location evidence="2">Membrane</location>
        <topology evidence="2">Multi-pass membrane protein</topology>
    </subcellularLocation>
</comment>
<comment type="similarity">
    <text evidence="2">Belongs to the TMEM229 family.</text>
</comment>
<accession>Q5F3L7</accession>
<dbReference type="EMBL" id="AJ851633">
    <property type="protein sequence ID" value="CAH65267.1"/>
    <property type="molecule type" value="mRNA"/>
</dbReference>
<dbReference type="RefSeq" id="NP_001012603.1">
    <property type="nucleotide sequence ID" value="NM_001012585.1"/>
</dbReference>
<dbReference type="RefSeq" id="NP_001384093.1">
    <property type="nucleotide sequence ID" value="NM_001397164.1"/>
</dbReference>
<dbReference type="RefSeq" id="NP_001384094.1">
    <property type="nucleotide sequence ID" value="NM_001397165.1"/>
</dbReference>
<dbReference type="RefSeq" id="XP_015142810.1">
    <property type="nucleotide sequence ID" value="XM_015287324.4"/>
</dbReference>
<dbReference type="RefSeq" id="XP_015142811.1">
    <property type="nucleotide sequence ID" value="XM_015287325.1"/>
</dbReference>
<dbReference type="RefSeq" id="XP_015142812.1">
    <property type="nucleotide sequence ID" value="XM_015287326.1"/>
</dbReference>
<dbReference type="RefSeq" id="XP_015142813.1">
    <property type="nucleotide sequence ID" value="XM_015287327.4"/>
</dbReference>
<dbReference type="RefSeq" id="XP_015142814.1">
    <property type="nucleotide sequence ID" value="XM_015287328.4"/>
</dbReference>
<dbReference type="RefSeq" id="XP_015142815.1">
    <property type="nucleotide sequence ID" value="XM_015287329.4"/>
</dbReference>
<dbReference type="RefSeq" id="XP_015142816.1">
    <property type="nucleotide sequence ID" value="XM_015287330.4"/>
</dbReference>
<dbReference type="RefSeq" id="XP_015142817.1">
    <property type="nucleotide sequence ID" value="XM_015287331.1"/>
</dbReference>
<dbReference type="RefSeq" id="XP_015142818.1">
    <property type="nucleotide sequence ID" value="XM_015287332.1"/>
</dbReference>
<dbReference type="RefSeq" id="XP_015142819.1">
    <property type="nucleotide sequence ID" value="XM_015287333.1"/>
</dbReference>
<dbReference type="RefSeq" id="XP_015142820.1">
    <property type="nucleotide sequence ID" value="XM_015287334.1"/>
</dbReference>
<dbReference type="RefSeq" id="XP_015142821.1">
    <property type="nucleotide sequence ID" value="XM_015287335.4"/>
</dbReference>
<dbReference type="RefSeq" id="XP_015142822.1">
    <property type="nucleotide sequence ID" value="XM_015287336.4"/>
</dbReference>
<dbReference type="RefSeq" id="XP_025006489.1">
    <property type="nucleotide sequence ID" value="XM_025150721.3"/>
</dbReference>
<dbReference type="RefSeq" id="XP_046774429.1">
    <property type="nucleotide sequence ID" value="XM_046918473.1"/>
</dbReference>
<dbReference type="RefSeq" id="XP_046774430.1">
    <property type="nucleotide sequence ID" value="XM_046918474.1"/>
</dbReference>
<dbReference type="RefSeq" id="XP_046774431.1">
    <property type="nucleotide sequence ID" value="XM_046918475.1"/>
</dbReference>
<dbReference type="RefSeq" id="XP_046774432.1">
    <property type="nucleotide sequence ID" value="XM_046918476.1"/>
</dbReference>
<dbReference type="RefSeq" id="XP_046774433.1">
    <property type="nucleotide sequence ID" value="XM_046918477.1"/>
</dbReference>
<dbReference type="RefSeq" id="XP_046774434.1">
    <property type="nucleotide sequence ID" value="XM_046918478.1"/>
</dbReference>
<dbReference type="RefSeq" id="XP_046774435.1">
    <property type="nucleotide sequence ID" value="XM_046918479.1"/>
</dbReference>
<dbReference type="RefSeq" id="XP_046774436.1">
    <property type="nucleotide sequence ID" value="XM_046918480.1"/>
</dbReference>
<dbReference type="RefSeq" id="XP_046774437.1">
    <property type="nucleotide sequence ID" value="XM_046918481.1"/>
</dbReference>
<dbReference type="RefSeq" id="XP_046774438.1">
    <property type="nucleotide sequence ID" value="XM_046918482.1"/>
</dbReference>
<dbReference type="RefSeq" id="XP_046797675.1">
    <property type="nucleotide sequence ID" value="XM_046941719.1"/>
</dbReference>
<dbReference type="RefSeq" id="XP_046797676.1">
    <property type="nucleotide sequence ID" value="XM_046941720.1"/>
</dbReference>
<dbReference type="RefSeq" id="XP_046797678.1">
    <property type="nucleotide sequence ID" value="XM_046941722.1"/>
</dbReference>
<dbReference type="RefSeq" id="XP_046797679.1">
    <property type="nucleotide sequence ID" value="XM_046941723.1"/>
</dbReference>
<dbReference type="RefSeq" id="XP_046797680.1">
    <property type="nucleotide sequence ID" value="XM_046941724.1"/>
</dbReference>
<dbReference type="RefSeq" id="XP_046797681.1">
    <property type="nucleotide sequence ID" value="XM_046941725.1"/>
</dbReference>
<dbReference type="RefSeq" id="XP_046797682.1">
    <property type="nucleotide sequence ID" value="XM_046941726.1"/>
</dbReference>
<dbReference type="RefSeq" id="XP_046797683.1">
    <property type="nucleotide sequence ID" value="XM_046941727.1"/>
</dbReference>
<dbReference type="RefSeq" id="XP_046797684.1">
    <property type="nucleotide sequence ID" value="XM_046941728.1"/>
</dbReference>
<dbReference type="RefSeq" id="XP_046797685.1">
    <property type="nucleotide sequence ID" value="XM_046941729.1"/>
</dbReference>
<dbReference type="RefSeq" id="XP_046797686.1">
    <property type="nucleotide sequence ID" value="XM_046941730.1"/>
</dbReference>
<dbReference type="RefSeq" id="XP_046797687.1">
    <property type="nucleotide sequence ID" value="XM_046941731.1"/>
</dbReference>
<dbReference type="FunCoup" id="Q5F3L7">
    <property type="interactions" value="67"/>
</dbReference>
<dbReference type="STRING" id="9031.ENSGALP00000015439"/>
<dbReference type="PaxDb" id="9031-ENSGALP00000015439"/>
<dbReference type="Ensembl" id="ENSGALT00010050104.1">
    <property type="protein sequence ID" value="ENSGALP00010029606.1"/>
    <property type="gene ID" value="ENSGALG00010020733.1"/>
</dbReference>
<dbReference type="Ensembl" id="ENSGALT00010050109.1">
    <property type="protein sequence ID" value="ENSGALP00010029609.1"/>
    <property type="gene ID" value="ENSGALG00010020733.1"/>
</dbReference>
<dbReference type="Ensembl" id="ENSGALT00010050113.1">
    <property type="protein sequence ID" value="ENSGALP00010029610.1"/>
    <property type="gene ID" value="ENSGALG00010020733.1"/>
</dbReference>
<dbReference type="Ensembl" id="ENSGALT00010050114.1">
    <property type="protein sequence ID" value="ENSGALP00010029611.1"/>
    <property type="gene ID" value="ENSGALG00010020733.1"/>
</dbReference>
<dbReference type="Ensembl" id="ENSGALT00010050115.1">
    <property type="protein sequence ID" value="ENSGALP00010029612.1"/>
    <property type="gene ID" value="ENSGALG00010020733.1"/>
</dbReference>
<dbReference type="Ensembl" id="ENSGALT00010050118.1">
    <property type="protein sequence ID" value="ENSGALP00010029616.1"/>
    <property type="gene ID" value="ENSGALG00010020733.1"/>
</dbReference>
<dbReference type="Ensembl" id="ENSGALT00010050120.1">
    <property type="protein sequence ID" value="ENSGALP00010029617.1"/>
    <property type="gene ID" value="ENSGALG00010020733.1"/>
</dbReference>
<dbReference type="Ensembl" id="ENSGALT00010050122.1">
    <property type="protein sequence ID" value="ENSGALP00010029619.1"/>
    <property type="gene ID" value="ENSGALG00010020733.1"/>
</dbReference>
<dbReference type="Ensembl" id="ENSGALT00010050123.1">
    <property type="protein sequence ID" value="ENSGALP00010029620.1"/>
    <property type="gene ID" value="ENSGALG00010020733.1"/>
</dbReference>
<dbReference type="Ensembl" id="ENSGALT00010050126.1">
    <property type="protein sequence ID" value="ENSGALP00010029622.1"/>
    <property type="gene ID" value="ENSGALG00010020733.1"/>
</dbReference>
<dbReference type="GeneID" id="423269"/>
<dbReference type="KEGG" id="gga:423269"/>
<dbReference type="CTD" id="161145"/>
<dbReference type="VEuPathDB" id="HostDB:geneid_423269"/>
<dbReference type="eggNOG" id="ENOG502QTFF">
    <property type="taxonomic scope" value="Eukaryota"/>
</dbReference>
<dbReference type="GeneTree" id="ENSGT00390000010899"/>
<dbReference type="HOGENOM" id="CLU_102218_0_0_1"/>
<dbReference type="InParanoid" id="Q5F3L7"/>
<dbReference type="OMA" id="DGWSNHR"/>
<dbReference type="OrthoDB" id="5946847at2759"/>
<dbReference type="PhylomeDB" id="Q5F3L7"/>
<dbReference type="TreeFam" id="TF336481"/>
<dbReference type="PRO" id="PR:Q5F3L7"/>
<dbReference type="Proteomes" id="UP000000539">
    <property type="component" value="Chromosome 5"/>
</dbReference>
<dbReference type="Bgee" id="ENSGALG00000009493">
    <property type="expression patterns" value="Expressed in brain and 13 other cell types or tissues"/>
</dbReference>
<dbReference type="GO" id="GO:0016020">
    <property type="term" value="C:membrane"/>
    <property type="evidence" value="ECO:0007669"/>
    <property type="project" value="UniProtKB-SubCell"/>
</dbReference>
<dbReference type="InterPro" id="IPR010540">
    <property type="entry name" value="CmpB_TMEM229"/>
</dbReference>
<dbReference type="PANTHER" id="PTHR31746">
    <property type="entry name" value="TRANSMEMBRANE PROTEIN 229 FAMILY MEMBER"/>
    <property type="match status" value="1"/>
</dbReference>
<dbReference type="PANTHER" id="PTHR31746:SF3">
    <property type="entry name" value="TRANSMEMBRANE PROTEIN 229B"/>
    <property type="match status" value="1"/>
</dbReference>
<dbReference type="Pfam" id="PF06541">
    <property type="entry name" value="ABC_trans_CmpB"/>
    <property type="match status" value="1"/>
</dbReference>
<reference key="1">
    <citation type="journal article" date="2005" name="Genome Biol.">
        <title>Full-length cDNAs from chicken bursal lymphocytes to facilitate gene function analysis.</title>
        <authorList>
            <person name="Caldwell R.B."/>
            <person name="Kierzek A.M."/>
            <person name="Arakawa H."/>
            <person name="Bezzubov Y."/>
            <person name="Zaim J."/>
            <person name="Fiedler P."/>
            <person name="Kutter S."/>
            <person name="Blagodatski A."/>
            <person name="Kostovska D."/>
            <person name="Koter M."/>
            <person name="Plachy J."/>
            <person name="Carninci P."/>
            <person name="Hayashizaki Y."/>
            <person name="Buerstedde J.-M."/>
        </authorList>
    </citation>
    <scope>NUCLEOTIDE SEQUENCE [LARGE SCALE MRNA]</scope>
    <source>
        <strain>CB</strain>
        <tissue>Bursa of Fabricius</tissue>
    </source>
</reference>
<protein>
    <recommendedName>
        <fullName>Transmembrane protein 229B</fullName>
    </recommendedName>
</protein>